<reference key="1">
    <citation type="journal article" date="2009" name="BMC Genomics">
        <title>Pseudogene accumulation in the evolutionary histories of Salmonella enterica serovars Paratyphi A and Typhi.</title>
        <authorList>
            <person name="Holt K.E."/>
            <person name="Thomson N.R."/>
            <person name="Wain J."/>
            <person name="Langridge G.C."/>
            <person name="Hasan R."/>
            <person name="Bhutta Z.A."/>
            <person name="Quail M.A."/>
            <person name="Norbertczak H."/>
            <person name="Walker D."/>
            <person name="Simmonds M."/>
            <person name="White B."/>
            <person name="Bason N."/>
            <person name="Mungall K."/>
            <person name="Dougan G."/>
            <person name="Parkhill J."/>
        </authorList>
    </citation>
    <scope>NUCLEOTIDE SEQUENCE [LARGE SCALE GENOMIC DNA]</scope>
    <source>
        <strain>AKU_12601</strain>
    </source>
</reference>
<evidence type="ECO:0000255" key="1">
    <source>
        <dbReference type="HAMAP-Rule" id="MF_00690"/>
    </source>
</evidence>
<comment type="similarity">
    <text evidence="1">Belongs to the UPF0270 family.</text>
</comment>
<protein>
    <recommendedName>
        <fullName evidence="1">UPF0270 protein YheU</fullName>
    </recommendedName>
</protein>
<proteinExistence type="inferred from homology"/>
<dbReference type="EMBL" id="FM200053">
    <property type="protein sequence ID" value="CAR61359.1"/>
    <property type="molecule type" value="Genomic_DNA"/>
</dbReference>
<dbReference type="RefSeq" id="WP_000586568.1">
    <property type="nucleotide sequence ID" value="NC_011147.1"/>
</dbReference>
<dbReference type="SMR" id="B5BH08"/>
<dbReference type="KEGG" id="sek:SSPA3107"/>
<dbReference type="HOGENOM" id="CLU_186759_1_0_6"/>
<dbReference type="Proteomes" id="UP000001869">
    <property type="component" value="Chromosome"/>
</dbReference>
<dbReference type="Gene3D" id="1.10.10.610">
    <property type="entry name" value="YehU-like"/>
    <property type="match status" value="1"/>
</dbReference>
<dbReference type="HAMAP" id="MF_00690">
    <property type="entry name" value="UPF0270"/>
    <property type="match status" value="1"/>
</dbReference>
<dbReference type="InterPro" id="IPR010648">
    <property type="entry name" value="UPF0270"/>
</dbReference>
<dbReference type="InterPro" id="IPR036685">
    <property type="entry name" value="YehU-like_sf"/>
</dbReference>
<dbReference type="NCBIfam" id="NF003438">
    <property type="entry name" value="PRK04966.1"/>
    <property type="match status" value="1"/>
</dbReference>
<dbReference type="Pfam" id="PF06794">
    <property type="entry name" value="UPF0270"/>
    <property type="match status" value="1"/>
</dbReference>
<dbReference type="PIRSF" id="PIRSF006169">
    <property type="entry name" value="UCP006169"/>
    <property type="match status" value="1"/>
</dbReference>
<dbReference type="SUPFAM" id="SSF118001">
    <property type="entry name" value="YehU-like"/>
    <property type="match status" value="1"/>
</dbReference>
<gene>
    <name evidence="1" type="primary">yheU</name>
    <name type="ordered locus">SSPA3107</name>
</gene>
<name>YHEU_SALPK</name>
<feature type="chain" id="PRO_1000132025" description="UPF0270 protein YheU">
    <location>
        <begin position="1"/>
        <end position="72"/>
    </location>
</feature>
<organism>
    <name type="scientific">Salmonella paratyphi A (strain AKU_12601)</name>
    <dbReference type="NCBI Taxonomy" id="554290"/>
    <lineage>
        <taxon>Bacteria</taxon>
        <taxon>Pseudomonadati</taxon>
        <taxon>Pseudomonadota</taxon>
        <taxon>Gammaproteobacteria</taxon>
        <taxon>Enterobacterales</taxon>
        <taxon>Enterobacteriaceae</taxon>
        <taxon>Salmonella</taxon>
    </lineage>
</organism>
<sequence length="72" mass="8350">MIIPWQGLAPDTLDNLIESFVLREGTDYGEHERSLEQKVADVKRQLQSGEAVLVWSELHETVNIMPKKQFRE</sequence>
<accession>B5BH08</accession>